<name>S12A4_RAT</name>
<evidence type="ECO:0000250" key="1">
    <source>
        <dbReference type="UniProtKB" id="Q28677"/>
    </source>
</evidence>
<evidence type="ECO:0000250" key="2">
    <source>
        <dbReference type="UniProtKB" id="Q9JIS8"/>
    </source>
</evidence>
<evidence type="ECO:0000250" key="3">
    <source>
        <dbReference type="UniProtKB" id="Q9UHW9"/>
    </source>
</evidence>
<evidence type="ECO:0000250" key="4">
    <source>
        <dbReference type="UniProtKB" id="Q9UP95"/>
    </source>
</evidence>
<evidence type="ECO:0000255" key="5"/>
<evidence type="ECO:0000256" key="6">
    <source>
        <dbReference type="SAM" id="MobiDB-lite"/>
    </source>
</evidence>
<evidence type="ECO:0000269" key="7">
    <source>
    </source>
</evidence>
<evidence type="ECO:0000269" key="8">
    <source>
    </source>
</evidence>
<evidence type="ECO:0000269" key="9">
    <source>
    </source>
</evidence>
<evidence type="ECO:0000305" key="10"/>
<evidence type="ECO:0007744" key="11">
    <source>
    </source>
</evidence>
<reference key="1">
    <citation type="journal article" date="1996" name="J. Biol. Chem.">
        <title>Molecular cloning and functional expression of the K-Cl cotransporter from rabbit, rat, and human. A new member of the cation-chloride cotransporter family.</title>
        <authorList>
            <person name="Gillen C.M."/>
            <person name="Brill S."/>
            <person name="Payne J.A."/>
            <person name="Forbush B. III"/>
        </authorList>
    </citation>
    <scope>NUCLEOTIDE SEQUENCE [MRNA]</scope>
    <scope>TISSUE SPECIFICITY</scope>
    <source>
        <strain>Sprague-Dawley</strain>
        <tissue>Brain</tissue>
    </source>
</reference>
<reference key="2">
    <citation type="submission" date="1996-10" db="EMBL/GenBank/DDBJ databases">
        <authorList>
            <person name="Adams L.A."/>
            <person name="Werny I."/>
            <person name="Schwartz S.M."/>
        </authorList>
    </citation>
    <scope>NUCLEOTIDE SEQUENCE [MRNA] OF 842-970</scope>
    <source>
        <strain>Wistar Kyoto</strain>
        <tissue>Aorta</tissue>
    </source>
</reference>
<reference key="3">
    <citation type="journal article" date="1999" name="Am. J. Physiol.">
        <title>Mouse K-Cl cotransporter KCC1: cloning, mapping, pathological expression, and functional regulation.</title>
        <authorList>
            <person name="Su W."/>
            <person name="Shmukler B.E."/>
            <person name="Chernova M.N."/>
            <person name="Stuart-Tilley A.K."/>
            <person name="de Franceschi L."/>
            <person name="Brugnara C."/>
            <person name="Alper S.L."/>
        </authorList>
    </citation>
    <scope>GLYCOSYLATION</scope>
</reference>
<reference key="4">
    <citation type="journal article" date="1999" name="J. Biol. Chem.">
        <title>Cloning and characterization of KCC3 and KCC4, new members of the cation-chloride cotransporter gene family.</title>
        <authorList>
            <person name="Mount D.B."/>
            <person name="Mercado A."/>
            <person name="Song L."/>
            <person name="Xu J."/>
            <person name="George A.L. Jr."/>
            <person name="Delpire E."/>
            <person name="Gamba G."/>
        </authorList>
    </citation>
    <scope>FUNCTION</scope>
    <scope>TRANSPORTER ACTIVITY</scope>
</reference>
<reference key="5">
    <citation type="journal article" date="2012" name="Nat. Commun.">
        <title>Quantitative maps of protein phosphorylation sites across 14 different rat organs and tissues.</title>
        <authorList>
            <person name="Lundby A."/>
            <person name="Secher A."/>
            <person name="Lage K."/>
            <person name="Nordsborg N.B."/>
            <person name="Dmytriyev A."/>
            <person name="Lundby C."/>
            <person name="Olsen J.V."/>
        </authorList>
    </citation>
    <scope>PHOSPHORYLATION [LARGE SCALE ANALYSIS] AT SER-967</scope>
    <scope>IDENTIFICATION BY MASS SPECTROMETRY [LARGE SCALE ANALYSIS]</scope>
</reference>
<sequence length="1085" mass="120628">MPHFTVVPVDGPRRGDYDNLEGLSWVDYGERAEREDSDGQGNHRENSPFLSPLDASRGNDYYDRNLALFEEELDIRPKVSSLLGKLVSYTNLTQGAKEHEEAESGEGGRRRAAKAPSMGTLMGVYLPCLQNIFGVILFLRLTWMVGTAGVLQALLIVLICCCCTLLTAISMSAIATNGVVPAGGSYFMISRSLGPEFGGAVGLCFYLGTTFAAAMYILGAIEILLTYIAPPAAIFYPSGTHDMSSATLNNMRVYGTIFLTFMTLVVFVGVKYVNKFASLFLACVIISILSIYVGGIKSAFDPPVFPVCMLGNRTLSRDQFDICAKTVVVDNETVATRLWTFFCHSPNLTADSCDPYFLLNNVTEIPGIPGAAAGVLQENLWSAYLEKGEVVEKHGLPSTDTLGLKESLSLYVVADIATSFTVLVGIFFPSVTGIMAGSNRSGDLRDAQKSIPVGTILAIVTTSLVYFSSVILFGACIEGVVLRDKYGDGVSRNLVVGTLAWPSPWVIVVGSFFSTCGAGLQSLTGAPRLLQAIAKDNIIPFLRVFGHGKANGEPTWALLLTALIAELGILIASLDMVAPILSMFFLMCYLFVNLACAVQTLLRTPNWRPRFKYYHWALSFLGMSLCLALMFVSSWYYALVAMVIAGMIYKYIEYQGAEKEWGDGIRGLSLSAARYALLRLEEGPPHTKNWRPQLLVLLKLDEDLHVKYPRLLTFASQLKAGKGLTIVGSVIQGSFLESYGEAQAAEQTIKNMMEIEKVKGFCQVVVASKVREGLAHLIQSCGLGGMRHNSVVLGWPYGWRQSEDPRAWKTFIDTVRCTTAAHLALLVPKNIAFYPSNHERYLEGHIDVWWIVHDGGMLMLLPFLLRQHKVWKKCRMRIFTVAQMDDNSIQMKKDLAIFLYHLRLEAEVEVVEMHNSDISAYTYERTLMMEQRSQMLRQMRLTKTERDREAQLVKDRHSALRLESLYSDEEDESVTGADKIQMTWTRDKYMAEPWDPSHAPDNFRELVHIKPDQSNVRRMHTAVKLNEVIVTRSHDARLVLLNMPGPPKNSEGDENYMEFLEVLTEGLERVLLVRGGGREVITIYS</sequence>
<proteinExistence type="evidence at protein level"/>
<keyword id="KW-0067">ATP-binding</keyword>
<keyword id="KW-1003">Cell membrane</keyword>
<keyword id="KW-0868">Chloride</keyword>
<keyword id="KW-1015">Disulfide bond</keyword>
<keyword id="KW-0325">Glycoprotein</keyword>
<keyword id="KW-0406">Ion transport</keyword>
<keyword id="KW-0472">Membrane</keyword>
<keyword id="KW-0479">Metal-binding</keyword>
<keyword id="KW-0547">Nucleotide-binding</keyword>
<keyword id="KW-0597">Phosphoprotein</keyword>
<keyword id="KW-0630">Potassium</keyword>
<keyword id="KW-0633">Potassium transport</keyword>
<keyword id="KW-1185">Reference proteome</keyword>
<keyword id="KW-0769">Symport</keyword>
<keyword id="KW-0812">Transmembrane</keyword>
<keyword id="KW-1133">Transmembrane helix</keyword>
<keyword id="KW-0813">Transport</keyword>
<organism>
    <name type="scientific">Rattus norvegicus</name>
    <name type="common">Rat</name>
    <dbReference type="NCBI Taxonomy" id="10116"/>
    <lineage>
        <taxon>Eukaryota</taxon>
        <taxon>Metazoa</taxon>
        <taxon>Chordata</taxon>
        <taxon>Craniata</taxon>
        <taxon>Vertebrata</taxon>
        <taxon>Euteleostomi</taxon>
        <taxon>Mammalia</taxon>
        <taxon>Eutheria</taxon>
        <taxon>Euarchontoglires</taxon>
        <taxon>Glires</taxon>
        <taxon>Rodentia</taxon>
        <taxon>Myomorpha</taxon>
        <taxon>Muroidea</taxon>
        <taxon>Muridae</taxon>
        <taxon>Murinae</taxon>
        <taxon>Rattus</taxon>
    </lineage>
</organism>
<gene>
    <name type="primary">Slc12a4</name>
    <name type="synonym">Kcc1</name>
</gene>
<accession>Q63632</accession>
<accession>P70632</accession>
<protein>
    <recommendedName>
        <fullName>Solute carrier family 12 member 4</fullName>
    </recommendedName>
    <alternativeName>
        <fullName>Electroneutral potassium-chloride cotransporter 1</fullName>
    </alternativeName>
    <alternativeName>
        <fullName>Erythroid K-Cl cotransporter 1</fullName>
        <shortName>rKCC1</shortName>
    </alternativeName>
    <alternativeName>
        <fullName>Furosemide-sensitive K-Cl cotransporter</fullName>
    </alternativeName>
</protein>
<feature type="chain" id="PRO_0000178033" description="Solute carrier family 12 member 4">
    <location>
        <begin position="1"/>
        <end position="1085"/>
    </location>
</feature>
<feature type="topological domain" description="Cytoplasmic" evidence="10">
    <location>
        <begin position="1"/>
        <end position="119"/>
    </location>
</feature>
<feature type="transmembrane region" description="Discontinuously helical; Name=1" evidence="4">
    <location>
        <begin position="120"/>
        <end position="141"/>
    </location>
</feature>
<feature type="topological domain" description="Extracellular" evidence="10">
    <location>
        <begin position="142"/>
        <end position="149"/>
    </location>
</feature>
<feature type="transmembrane region" description="Helical; Name=2" evidence="4">
    <location>
        <begin position="150"/>
        <end position="172"/>
    </location>
</feature>
<feature type="topological domain" description="Cytoplasmic" evidence="10">
    <location>
        <begin position="173"/>
        <end position="196"/>
    </location>
</feature>
<feature type="transmembrane region" description="Helical; Name=3" evidence="4">
    <location>
        <begin position="197"/>
        <end position="225"/>
    </location>
</feature>
<feature type="topological domain" description="Extracellular" evidence="10">
    <location>
        <begin position="226"/>
        <end position="248"/>
    </location>
</feature>
<feature type="transmembrane region" description="Helical; Name=4" evidence="4">
    <location>
        <begin position="249"/>
        <end position="271"/>
    </location>
</feature>
<feature type="transmembrane region" description="Helical; Name=5" evidence="4">
    <location>
        <begin position="272"/>
        <end position="297"/>
    </location>
</feature>
<feature type="topological domain" description="Extracellular" evidence="10">
    <location>
        <begin position="298"/>
        <end position="419"/>
    </location>
</feature>
<feature type="transmembrane region" description="Helical; Name=6" evidence="4">
    <location>
        <begin position="420"/>
        <end position="440"/>
    </location>
</feature>
<feature type="topological domain" description="Cytoplasmic" evidence="10">
    <location>
        <begin position="441"/>
        <end position="450"/>
    </location>
</feature>
<feature type="transmembrane region" description="Helical; Name=7" evidence="4">
    <location>
        <begin position="451"/>
        <end position="473"/>
    </location>
</feature>
<feature type="topological domain" description="Extracellular" evidence="10">
    <location>
        <begin position="474"/>
        <end position="504"/>
    </location>
</feature>
<feature type="transmembrane region" description="Helical; Name=8" evidence="4">
    <location>
        <begin position="505"/>
        <end position="531"/>
    </location>
</feature>
<feature type="topological domain" description="Cytoplasmic" evidence="10">
    <location>
        <begin position="532"/>
        <end position="554"/>
    </location>
</feature>
<feature type="transmembrane region" description="Helical; Name=9" evidence="4">
    <location>
        <begin position="555"/>
        <end position="575"/>
    </location>
</feature>
<feature type="transmembrane region" description="Helical; Name=10" evidence="4">
    <location>
        <begin position="576"/>
        <end position="598"/>
    </location>
</feature>
<feature type="topological domain" description="Cytoplasmic" evidence="10">
    <location>
        <begin position="599"/>
        <end position="612"/>
    </location>
</feature>
<feature type="transmembrane region" description="Helical; Name=11" evidence="4">
    <location>
        <begin position="613"/>
        <end position="635"/>
    </location>
</feature>
<feature type="transmembrane region" description="Helical; Name=12" evidence="4">
    <location>
        <begin position="636"/>
        <end position="651"/>
    </location>
</feature>
<feature type="topological domain" description="Cytoplasmic" evidence="10">
    <location>
        <begin position="652"/>
        <end position="1085"/>
    </location>
</feature>
<feature type="region of interest" description="Disordered" evidence="6">
    <location>
        <begin position="32"/>
        <end position="56"/>
    </location>
</feature>
<feature type="region of interest" description="Scissor helix" evidence="4">
    <location>
        <begin position="665"/>
        <end position="681"/>
    </location>
</feature>
<feature type="binding site" evidence="4">
    <location>
        <position position="131"/>
    </location>
    <ligand>
        <name>K(+)</name>
        <dbReference type="ChEBI" id="CHEBI:29103"/>
    </ligand>
</feature>
<feature type="binding site" evidence="4">
    <location>
        <position position="132"/>
    </location>
    <ligand>
        <name>K(+)</name>
        <dbReference type="ChEBI" id="CHEBI:29103"/>
    </ligand>
</feature>
<feature type="binding site" evidence="4">
    <location>
        <position position="216"/>
    </location>
    <ligand>
        <name>K(+)</name>
        <dbReference type="ChEBI" id="CHEBI:29103"/>
    </ligand>
</feature>
<feature type="binding site" evidence="4">
    <location>
        <position position="429"/>
    </location>
    <ligand>
        <name>K(+)</name>
        <dbReference type="ChEBI" id="CHEBI:29103"/>
    </ligand>
</feature>
<feature type="binding site" evidence="4">
    <location>
        <position position="432"/>
    </location>
    <ligand>
        <name>K(+)</name>
        <dbReference type="ChEBI" id="CHEBI:29103"/>
    </ligand>
</feature>
<feature type="binding site" evidence="4">
    <location>
        <position position="433"/>
    </location>
    <ligand>
        <name>chloride</name>
        <dbReference type="ChEBI" id="CHEBI:17996"/>
        <label>1</label>
    </ligand>
</feature>
<feature type="binding site" evidence="4">
    <location>
        <position position="434"/>
    </location>
    <ligand>
        <name>chloride</name>
        <dbReference type="ChEBI" id="CHEBI:17996"/>
        <label>1</label>
    </ligand>
</feature>
<feature type="binding site" evidence="4">
    <location>
        <position position="435"/>
    </location>
    <ligand>
        <name>chloride</name>
        <dbReference type="ChEBI" id="CHEBI:17996"/>
        <label>1</label>
    </ligand>
</feature>
<feature type="binding site" evidence="4">
    <location>
        <position position="589"/>
    </location>
    <ligand>
        <name>chloride</name>
        <dbReference type="ChEBI" id="CHEBI:17996"/>
        <label>1</label>
    </ligand>
</feature>
<feature type="binding site" evidence="4">
    <location>
        <position position="589"/>
    </location>
    <ligand>
        <name>chloride</name>
        <dbReference type="ChEBI" id="CHEBI:17996"/>
        <label>2</label>
    </ligand>
</feature>
<feature type="binding site" evidence="4">
    <location>
        <position position="697"/>
    </location>
    <ligand>
        <name>ATP</name>
        <dbReference type="ChEBI" id="CHEBI:30616"/>
    </ligand>
</feature>
<feature type="binding site" evidence="4">
    <location>
        <position position="699"/>
    </location>
    <ligand>
        <name>ATP</name>
        <dbReference type="ChEBI" id="CHEBI:30616"/>
    </ligand>
</feature>
<feature type="binding site" evidence="4">
    <location>
        <position position="707"/>
    </location>
    <ligand>
        <name>ATP</name>
        <dbReference type="ChEBI" id="CHEBI:30616"/>
    </ligand>
</feature>
<feature type="binding site" evidence="4">
    <location>
        <position position="708"/>
    </location>
    <ligand>
        <name>ATP</name>
        <dbReference type="ChEBI" id="CHEBI:30616"/>
    </ligand>
</feature>
<feature type="binding site" evidence="4">
    <location>
        <position position="730"/>
    </location>
    <ligand>
        <name>ATP</name>
        <dbReference type="ChEBI" id="CHEBI:30616"/>
    </ligand>
</feature>
<feature type="binding site" evidence="4">
    <location>
        <position position="794"/>
    </location>
    <ligand>
        <name>ATP</name>
        <dbReference type="ChEBI" id="CHEBI:30616"/>
    </ligand>
</feature>
<feature type="binding site" evidence="4">
    <location>
        <position position="795"/>
    </location>
    <ligand>
        <name>ATP</name>
        <dbReference type="ChEBI" id="CHEBI:30616"/>
    </ligand>
</feature>
<feature type="binding site" evidence="4">
    <location>
        <position position="797"/>
    </location>
    <ligand>
        <name>ATP</name>
        <dbReference type="ChEBI" id="CHEBI:30616"/>
    </ligand>
</feature>
<feature type="modified residue" description="Phosphoserine" evidence="4">
    <location>
        <position position="24"/>
    </location>
</feature>
<feature type="modified residue" description="Phosphoserine" evidence="2">
    <location>
        <position position="47"/>
    </location>
</feature>
<feature type="modified residue" description="Phosphoserine" evidence="4">
    <location>
        <position position="51"/>
    </location>
</feature>
<feature type="modified residue" description="Phosphoserine" evidence="3">
    <location>
        <position position="81"/>
    </location>
</feature>
<feature type="modified residue" description="Phosphoserine" evidence="4">
    <location>
        <position position="88"/>
    </location>
</feature>
<feature type="modified residue" description="Phosphoserine" evidence="4">
    <location>
        <position position="734"/>
    </location>
</feature>
<feature type="modified residue" description="Phosphoserine" evidence="4">
    <location>
        <position position="916"/>
    </location>
</feature>
<feature type="modified residue" description="Phosphoserine" evidence="11">
    <location>
        <position position="967"/>
    </location>
</feature>
<feature type="modified residue" description="Phosphothreonine" evidence="4">
    <location>
        <position position="983"/>
    </location>
</feature>
<feature type="modified residue" description="Phosphoserine" evidence="4">
    <location>
        <position position="1050"/>
    </location>
</feature>
<feature type="glycosylation site" description="N-linked (GlcNAc...) asparagine" evidence="5">
    <location>
        <position position="312"/>
    </location>
</feature>
<feature type="glycosylation site" description="N-linked (GlcNAc...) asparagine" evidence="5">
    <location>
        <position position="331"/>
    </location>
</feature>
<feature type="glycosylation site" description="N-linked (GlcNAc...) asparagine" evidence="5">
    <location>
        <position position="347"/>
    </location>
</feature>
<feature type="disulfide bond" evidence="4">
    <location>
        <begin position="308"/>
        <end position="323"/>
    </location>
</feature>
<feature type="disulfide bond" evidence="4">
    <location>
        <begin position="343"/>
        <end position="353"/>
    </location>
</feature>
<feature type="sequence conflict" description="In Ref. 2; AAB18960." evidence="10" ref="2">
    <original>R</original>
    <variation>K</variation>
    <location>
        <position position="940"/>
    </location>
</feature>
<feature type="sequence conflict" description="In Ref. 2; AAB18960." evidence="10" ref="2">
    <original>E</original>
    <variation>K</variation>
    <location>
        <position position="949"/>
    </location>
</feature>
<feature type="sequence conflict" description="In Ref. 2; AAB18960." evidence="10" ref="2">
    <original>A</original>
    <variation>G</variation>
    <location>
        <position position="959"/>
    </location>
</feature>
<feature type="sequence conflict" description="In Ref. 2; AAB18960." evidence="10" ref="2">
    <original>R</original>
    <variation>K</variation>
    <location>
        <position position="961"/>
    </location>
</feature>
<feature type="sequence conflict" description="In Ref. 2; AAB18960." evidence="10" ref="2">
    <original>ES</original>
    <variation>KN</variation>
    <location>
        <begin position="963"/>
        <end position="964"/>
    </location>
</feature>
<feature type="sequence conflict" description="In Ref. 2; AAB18960." evidence="10" ref="2">
    <original>E</original>
    <variation>K</variation>
    <location>
        <position position="969"/>
    </location>
</feature>
<comment type="function">
    <text evidence="7 10">Mediates electroneutral potassium-chloride cotransport when activated by cell swelling (PubMed:10347194). May contribute to cell volume homeostasis in single cells. May be involved in the regulation of basolateral Cl(-) exit in NaCl absorbing epithelia (Probable).</text>
</comment>
<comment type="catalytic activity">
    <reaction evidence="7">
        <text>K(+)(in) + chloride(in) = K(+)(out) + chloride(out)</text>
        <dbReference type="Rhea" id="RHEA:72427"/>
        <dbReference type="ChEBI" id="CHEBI:17996"/>
        <dbReference type="ChEBI" id="CHEBI:29103"/>
    </reaction>
</comment>
<comment type="activity regulation">
    <text evidence="4">Inhibited by WNK3.</text>
</comment>
<comment type="subunit">
    <text evidence="4">Homodimer; adopts a domain-swap conformation at the scissor helices connecting the transmembrane domain and C-terminal domain. Heterodimer with other K-Cl cotransporters.</text>
</comment>
<comment type="subcellular location">
    <subcellularLocation>
        <location evidence="1">Cell membrane</location>
        <topology evidence="5">Multi-pass membrane protein</topology>
    </subcellularLocation>
</comment>
<comment type="tissue specificity">
    <text evidence="9">Ubiquitous.</text>
</comment>
<comment type="PTM">
    <text evidence="8">N-glycosylated.</text>
</comment>
<comment type="PTM">
    <text evidence="4">Phosphorylated, phosphorylation may regulate transporter activity.</text>
</comment>
<comment type="similarity">
    <text evidence="10">Belongs to the SLC12A transporter family. K/Cl co-transporter subfamily.</text>
</comment>
<dbReference type="EMBL" id="U55815">
    <property type="protein sequence ID" value="AAC52634.1"/>
    <property type="molecule type" value="mRNA"/>
</dbReference>
<dbReference type="EMBL" id="U75396">
    <property type="protein sequence ID" value="AAB18960.1"/>
    <property type="molecule type" value="mRNA"/>
</dbReference>
<dbReference type="PIR" id="T31429">
    <property type="entry name" value="T31429"/>
</dbReference>
<dbReference type="RefSeq" id="NP_062102.1">
    <property type="nucleotide sequence ID" value="NM_019229.2"/>
</dbReference>
<dbReference type="SMR" id="Q63632"/>
<dbReference type="FunCoup" id="Q63632">
    <property type="interactions" value="1851"/>
</dbReference>
<dbReference type="STRING" id="10116.ENSRNOP00000026730"/>
<dbReference type="TCDB" id="2.A.30.1.13">
    <property type="family name" value="the cation-chloride cotransporter (ccc) family"/>
</dbReference>
<dbReference type="GlyCosmos" id="Q63632">
    <property type="glycosylation" value="4 sites, No reported glycans"/>
</dbReference>
<dbReference type="GlyGen" id="Q63632">
    <property type="glycosylation" value="3 sites"/>
</dbReference>
<dbReference type="iPTMnet" id="Q63632"/>
<dbReference type="PhosphoSitePlus" id="Q63632"/>
<dbReference type="PaxDb" id="10116-ENSRNOP00000026730"/>
<dbReference type="Ensembl" id="ENSRNOT00000026730.5">
    <property type="protein sequence ID" value="ENSRNOP00000026730.3"/>
    <property type="gene ID" value="ENSRNOG00000019651.5"/>
</dbReference>
<dbReference type="GeneID" id="29501"/>
<dbReference type="KEGG" id="rno:29501"/>
<dbReference type="UCSC" id="RGD:3687">
    <property type="organism name" value="rat"/>
</dbReference>
<dbReference type="AGR" id="RGD:3687"/>
<dbReference type="CTD" id="6560"/>
<dbReference type="RGD" id="3687">
    <property type="gene designation" value="Slc12a4"/>
</dbReference>
<dbReference type="eggNOG" id="KOG2082">
    <property type="taxonomic scope" value="Eukaryota"/>
</dbReference>
<dbReference type="GeneTree" id="ENSGT00940000157672"/>
<dbReference type="HOGENOM" id="CLU_001883_1_2_1"/>
<dbReference type="InParanoid" id="Q63632"/>
<dbReference type="OMA" id="KNWRPHI"/>
<dbReference type="OrthoDB" id="2020542at2759"/>
<dbReference type="PhylomeDB" id="Q63632"/>
<dbReference type="Reactome" id="R-RNO-426117">
    <property type="pathway name" value="Cation-coupled Chloride cotransporters"/>
</dbReference>
<dbReference type="PRO" id="PR:Q63632"/>
<dbReference type="Proteomes" id="UP000002494">
    <property type="component" value="Chromosome 19"/>
</dbReference>
<dbReference type="Bgee" id="ENSRNOG00000019651">
    <property type="expression patterns" value="Expressed in ovary and 18 other cell types or tissues"/>
</dbReference>
<dbReference type="GO" id="GO:0016020">
    <property type="term" value="C:membrane"/>
    <property type="evidence" value="ECO:0000250"/>
    <property type="project" value="UniProtKB"/>
</dbReference>
<dbReference type="GO" id="GO:0005886">
    <property type="term" value="C:plasma membrane"/>
    <property type="evidence" value="ECO:0000250"/>
    <property type="project" value="UniProtKB"/>
</dbReference>
<dbReference type="GO" id="GO:0045202">
    <property type="term" value="C:synapse"/>
    <property type="evidence" value="ECO:0007669"/>
    <property type="project" value="GOC"/>
</dbReference>
<dbReference type="GO" id="GO:0005524">
    <property type="term" value="F:ATP binding"/>
    <property type="evidence" value="ECO:0000250"/>
    <property type="project" value="UniProtKB"/>
</dbReference>
<dbReference type="GO" id="GO:0046872">
    <property type="term" value="F:metal ion binding"/>
    <property type="evidence" value="ECO:0007669"/>
    <property type="project" value="UniProtKB-KW"/>
</dbReference>
<dbReference type="GO" id="GO:0015379">
    <property type="term" value="F:potassium:chloride symporter activity"/>
    <property type="evidence" value="ECO:0000250"/>
    <property type="project" value="UniProtKB"/>
</dbReference>
<dbReference type="GO" id="GO:0019901">
    <property type="term" value="F:protein kinase binding"/>
    <property type="evidence" value="ECO:0000266"/>
    <property type="project" value="RGD"/>
</dbReference>
<dbReference type="GO" id="GO:0120283">
    <property type="term" value="F:protein serine/threonine kinase binding"/>
    <property type="evidence" value="ECO:0007669"/>
    <property type="project" value="Ensembl"/>
</dbReference>
<dbReference type="GO" id="GO:0006884">
    <property type="term" value="P:cell volume homeostasis"/>
    <property type="evidence" value="ECO:0000318"/>
    <property type="project" value="GO_Central"/>
</dbReference>
<dbReference type="GO" id="GO:0007268">
    <property type="term" value="P:chemical synaptic transmission"/>
    <property type="evidence" value="ECO:0000318"/>
    <property type="project" value="GO_Central"/>
</dbReference>
<dbReference type="GO" id="GO:0055064">
    <property type="term" value="P:chloride ion homeostasis"/>
    <property type="evidence" value="ECO:0000250"/>
    <property type="project" value="UniProtKB"/>
</dbReference>
<dbReference type="GO" id="GO:1902476">
    <property type="term" value="P:chloride transmembrane transport"/>
    <property type="evidence" value="ECO:0000318"/>
    <property type="project" value="GO_Central"/>
</dbReference>
<dbReference type="GO" id="GO:0055075">
    <property type="term" value="P:potassium ion homeostasis"/>
    <property type="evidence" value="ECO:0000250"/>
    <property type="project" value="UniProtKB"/>
</dbReference>
<dbReference type="GO" id="GO:1990573">
    <property type="term" value="P:potassium ion import across plasma membrane"/>
    <property type="evidence" value="ECO:0000318"/>
    <property type="project" value="GO_Central"/>
</dbReference>
<dbReference type="GO" id="GO:0071805">
    <property type="term" value="P:potassium ion transmembrane transport"/>
    <property type="evidence" value="ECO:0000250"/>
    <property type="project" value="UniProtKB"/>
</dbReference>
<dbReference type="FunFam" id="1.20.1740.10:FF:000049">
    <property type="entry name" value="Solute carrier family 12 (potassium/chloride transporter), member 4"/>
    <property type="match status" value="1"/>
</dbReference>
<dbReference type="FunFam" id="1.20.1740.10:FF:000040">
    <property type="entry name" value="Solute carrier family 12 member 6"/>
    <property type="match status" value="1"/>
</dbReference>
<dbReference type="Gene3D" id="1.20.1740.10">
    <property type="entry name" value="Amino acid/polyamine transporter I"/>
    <property type="match status" value="1"/>
</dbReference>
<dbReference type="InterPro" id="IPR004841">
    <property type="entry name" value="AA-permease/SLC12A_dom"/>
</dbReference>
<dbReference type="InterPro" id="IPR000622">
    <property type="entry name" value="KCC1"/>
</dbReference>
<dbReference type="InterPro" id="IPR000076">
    <property type="entry name" value="KCL_cotranspt"/>
</dbReference>
<dbReference type="InterPro" id="IPR018491">
    <property type="entry name" value="SLC12_C"/>
</dbReference>
<dbReference type="InterPro" id="IPR004842">
    <property type="entry name" value="SLC12A_fam"/>
</dbReference>
<dbReference type="NCBIfam" id="TIGR00930">
    <property type="entry name" value="2a30"/>
    <property type="match status" value="1"/>
</dbReference>
<dbReference type="PANTHER" id="PTHR11827:SF46">
    <property type="entry name" value="SOLUTE CARRIER FAMILY 12 MEMBER 4"/>
    <property type="match status" value="1"/>
</dbReference>
<dbReference type="PANTHER" id="PTHR11827">
    <property type="entry name" value="SOLUTE CARRIER FAMILY 12, CATION COTRANSPORTERS"/>
    <property type="match status" value="1"/>
</dbReference>
<dbReference type="Pfam" id="PF00324">
    <property type="entry name" value="AA_permease"/>
    <property type="match status" value="2"/>
</dbReference>
<dbReference type="Pfam" id="PF03522">
    <property type="entry name" value="SLC12"/>
    <property type="match status" value="2"/>
</dbReference>
<dbReference type="PRINTS" id="PR01081">
    <property type="entry name" value="KCLTRNSPORT"/>
</dbReference>
<dbReference type="PRINTS" id="PR01082">
    <property type="entry name" value="KCLTRNSPORT1"/>
</dbReference>